<gene>
    <name evidence="2" type="primary">folE</name>
    <name type="ordered locus">PG_0625</name>
</gene>
<comment type="catalytic activity">
    <reaction evidence="2">
        <text>GTP + H2O = 7,8-dihydroneopterin 3'-triphosphate + formate + H(+)</text>
        <dbReference type="Rhea" id="RHEA:17473"/>
        <dbReference type="ChEBI" id="CHEBI:15377"/>
        <dbReference type="ChEBI" id="CHEBI:15378"/>
        <dbReference type="ChEBI" id="CHEBI:15740"/>
        <dbReference type="ChEBI" id="CHEBI:37565"/>
        <dbReference type="ChEBI" id="CHEBI:58462"/>
        <dbReference type="EC" id="3.5.4.16"/>
    </reaction>
</comment>
<comment type="pathway">
    <text evidence="2">Cofactor biosynthesis; 7,8-dihydroneopterin triphosphate biosynthesis; 7,8-dihydroneopterin triphosphate from GTP: step 1/1.</text>
</comment>
<comment type="subunit">
    <text evidence="1">Toroid-shaped homodecamer, composed of two pentamers of five dimers.</text>
</comment>
<comment type="similarity">
    <text evidence="2">Belongs to the GTP cyclohydrolase I family.</text>
</comment>
<sequence length="193" mass="22302">MTEIEKEEACSRLQQHYAQVLSLLGEDPKREGLLKTPLRVAKAMQFLTKGYNEDPEAILRAAMFEEDYQQMVIVKDIDFFSMCEHHMLPFFGKAHVGYIPNRYITGLSKLPRVVDVFARRLQVQERLTTQIKECIQNTLNPLGVIVVIEAQHMCMQMRGVEKQNSLTTTSDFTGAFEESTTREEFLNLIGRRR</sequence>
<proteinExistence type="inferred from homology"/>
<evidence type="ECO:0000250" key="1"/>
<evidence type="ECO:0000255" key="2">
    <source>
        <dbReference type="HAMAP-Rule" id="MF_00223"/>
    </source>
</evidence>
<keyword id="KW-0342">GTP-binding</keyword>
<keyword id="KW-0378">Hydrolase</keyword>
<keyword id="KW-0479">Metal-binding</keyword>
<keyword id="KW-0547">Nucleotide-binding</keyword>
<keyword id="KW-0554">One-carbon metabolism</keyword>
<keyword id="KW-1185">Reference proteome</keyword>
<keyword id="KW-0862">Zinc</keyword>
<feature type="chain" id="PRO_0000119427" description="GTP cyclohydrolase 1">
    <location>
        <begin position="1"/>
        <end position="193"/>
    </location>
</feature>
<feature type="binding site" evidence="2">
    <location>
        <position position="83"/>
    </location>
    <ligand>
        <name>Zn(2+)</name>
        <dbReference type="ChEBI" id="CHEBI:29105"/>
    </ligand>
</feature>
<feature type="binding site" evidence="2">
    <location>
        <position position="86"/>
    </location>
    <ligand>
        <name>Zn(2+)</name>
        <dbReference type="ChEBI" id="CHEBI:29105"/>
    </ligand>
</feature>
<feature type="binding site" evidence="2">
    <location>
        <position position="154"/>
    </location>
    <ligand>
        <name>Zn(2+)</name>
        <dbReference type="ChEBI" id="CHEBI:29105"/>
    </ligand>
</feature>
<name>GCH1_PORGI</name>
<organism>
    <name type="scientific">Porphyromonas gingivalis (strain ATCC BAA-308 / W83)</name>
    <dbReference type="NCBI Taxonomy" id="242619"/>
    <lineage>
        <taxon>Bacteria</taxon>
        <taxon>Pseudomonadati</taxon>
        <taxon>Bacteroidota</taxon>
        <taxon>Bacteroidia</taxon>
        <taxon>Bacteroidales</taxon>
        <taxon>Porphyromonadaceae</taxon>
        <taxon>Porphyromonas</taxon>
    </lineage>
</organism>
<accession>Q7MWI5</accession>
<dbReference type="EC" id="3.5.4.16" evidence="2"/>
<dbReference type="EMBL" id="AE015924">
    <property type="protein sequence ID" value="AAQ65809.1"/>
    <property type="molecule type" value="Genomic_DNA"/>
</dbReference>
<dbReference type="RefSeq" id="WP_004585175.1">
    <property type="nucleotide sequence ID" value="NC_002950.2"/>
</dbReference>
<dbReference type="SMR" id="Q7MWI5"/>
<dbReference type="STRING" id="242619.PG_0625"/>
<dbReference type="EnsemblBacteria" id="AAQ65809">
    <property type="protein sequence ID" value="AAQ65809"/>
    <property type="gene ID" value="PG_0625"/>
</dbReference>
<dbReference type="GeneID" id="29255890"/>
<dbReference type="GeneID" id="57240664"/>
<dbReference type="KEGG" id="pgi:PG_0625"/>
<dbReference type="eggNOG" id="COG0302">
    <property type="taxonomic scope" value="Bacteria"/>
</dbReference>
<dbReference type="HOGENOM" id="CLU_049768_2_0_10"/>
<dbReference type="UniPathway" id="UPA00848">
    <property type="reaction ID" value="UER00151"/>
</dbReference>
<dbReference type="Proteomes" id="UP000000588">
    <property type="component" value="Chromosome"/>
</dbReference>
<dbReference type="GO" id="GO:0005737">
    <property type="term" value="C:cytoplasm"/>
    <property type="evidence" value="ECO:0007669"/>
    <property type="project" value="TreeGrafter"/>
</dbReference>
<dbReference type="GO" id="GO:0005525">
    <property type="term" value="F:GTP binding"/>
    <property type="evidence" value="ECO:0007669"/>
    <property type="project" value="UniProtKB-KW"/>
</dbReference>
<dbReference type="GO" id="GO:0003934">
    <property type="term" value="F:GTP cyclohydrolase I activity"/>
    <property type="evidence" value="ECO:0007669"/>
    <property type="project" value="UniProtKB-UniRule"/>
</dbReference>
<dbReference type="GO" id="GO:0008270">
    <property type="term" value="F:zinc ion binding"/>
    <property type="evidence" value="ECO:0007669"/>
    <property type="project" value="UniProtKB-UniRule"/>
</dbReference>
<dbReference type="GO" id="GO:0006730">
    <property type="term" value="P:one-carbon metabolic process"/>
    <property type="evidence" value="ECO:0007669"/>
    <property type="project" value="UniProtKB-UniRule"/>
</dbReference>
<dbReference type="GO" id="GO:0006729">
    <property type="term" value="P:tetrahydrobiopterin biosynthetic process"/>
    <property type="evidence" value="ECO:0007669"/>
    <property type="project" value="TreeGrafter"/>
</dbReference>
<dbReference type="GO" id="GO:0046654">
    <property type="term" value="P:tetrahydrofolate biosynthetic process"/>
    <property type="evidence" value="ECO:0007669"/>
    <property type="project" value="UniProtKB-UniRule"/>
</dbReference>
<dbReference type="FunFam" id="1.10.286.10:FF:000003">
    <property type="entry name" value="GTP cyclohydrolase 1"/>
    <property type="match status" value="1"/>
</dbReference>
<dbReference type="FunFam" id="3.30.1130.10:FF:000001">
    <property type="entry name" value="GTP cyclohydrolase 1"/>
    <property type="match status" value="1"/>
</dbReference>
<dbReference type="Gene3D" id="1.10.286.10">
    <property type="match status" value="1"/>
</dbReference>
<dbReference type="Gene3D" id="3.30.1130.10">
    <property type="match status" value="1"/>
</dbReference>
<dbReference type="HAMAP" id="MF_00223">
    <property type="entry name" value="FolE"/>
    <property type="match status" value="1"/>
</dbReference>
<dbReference type="InterPro" id="IPR043133">
    <property type="entry name" value="GTP-CH-I_C/QueF"/>
</dbReference>
<dbReference type="InterPro" id="IPR043134">
    <property type="entry name" value="GTP-CH-I_N"/>
</dbReference>
<dbReference type="InterPro" id="IPR001474">
    <property type="entry name" value="GTP_CycHdrlase_I"/>
</dbReference>
<dbReference type="InterPro" id="IPR018234">
    <property type="entry name" value="GTP_CycHdrlase_I_CS"/>
</dbReference>
<dbReference type="InterPro" id="IPR020602">
    <property type="entry name" value="GTP_CycHdrlase_I_dom"/>
</dbReference>
<dbReference type="NCBIfam" id="TIGR00063">
    <property type="entry name" value="folE"/>
    <property type="match status" value="1"/>
</dbReference>
<dbReference type="NCBIfam" id="NF006825">
    <property type="entry name" value="PRK09347.1-2"/>
    <property type="match status" value="1"/>
</dbReference>
<dbReference type="NCBIfam" id="NF006826">
    <property type="entry name" value="PRK09347.1-3"/>
    <property type="match status" value="1"/>
</dbReference>
<dbReference type="PANTHER" id="PTHR11109:SF7">
    <property type="entry name" value="GTP CYCLOHYDROLASE 1"/>
    <property type="match status" value="1"/>
</dbReference>
<dbReference type="PANTHER" id="PTHR11109">
    <property type="entry name" value="GTP CYCLOHYDROLASE I"/>
    <property type="match status" value="1"/>
</dbReference>
<dbReference type="Pfam" id="PF01227">
    <property type="entry name" value="GTP_cyclohydroI"/>
    <property type="match status" value="1"/>
</dbReference>
<dbReference type="SUPFAM" id="SSF55620">
    <property type="entry name" value="Tetrahydrobiopterin biosynthesis enzymes-like"/>
    <property type="match status" value="1"/>
</dbReference>
<dbReference type="PROSITE" id="PS00859">
    <property type="entry name" value="GTP_CYCLOHYDROL_1_1"/>
    <property type="match status" value="1"/>
</dbReference>
<dbReference type="PROSITE" id="PS00860">
    <property type="entry name" value="GTP_CYCLOHYDROL_1_2"/>
    <property type="match status" value="1"/>
</dbReference>
<protein>
    <recommendedName>
        <fullName evidence="2">GTP cyclohydrolase 1</fullName>
        <ecNumber evidence="2">3.5.4.16</ecNumber>
    </recommendedName>
    <alternativeName>
        <fullName evidence="2">GTP cyclohydrolase I</fullName>
        <shortName evidence="2">GTP-CH-I</shortName>
    </alternativeName>
</protein>
<reference key="1">
    <citation type="journal article" date="2003" name="J. Bacteriol.">
        <title>Complete genome sequence of the oral pathogenic bacterium Porphyromonas gingivalis strain W83.</title>
        <authorList>
            <person name="Nelson K.E."/>
            <person name="Fleischmann R.D."/>
            <person name="DeBoy R.T."/>
            <person name="Paulsen I.T."/>
            <person name="Fouts D.E."/>
            <person name="Eisen J.A."/>
            <person name="Daugherty S.C."/>
            <person name="Dodson R.J."/>
            <person name="Durkin A.S."/>
            <person name="Gwinn M.L."/>
            <person name="Haft D.H."/>
            <person name="Kolonay J.F."/>
            <person name="Nelson W.C."/>
            <person name="Mason T.M."/>
            <person name="Tallon L."/>
            <person name="Gray J."/>
            <person name="Granger D."/>
            <person name="Tettelin H."/>
            <person name="Dong H."/>
            <person name="Galvin J.L."/>
            <person name="Duncan M.J."/>
            <person name="Dewhirst F.E."/>
            <person name="Fraser C.M."/>
        </authorList>
    </citation>
    <scope>NUCLEOTIDE SEQUENCE [LARGE SCALE GENOMIC DNA]</scope>
    <source>
        <strain>ATCC BAA-308 / W83</strain>
    </source>
</reference>